<proteinExistence type="inferred from homology"/>
<evidence type="ECO:0000255" key="1">
    <source>
        <dbReference type="HAMAP-Rule" id="MF_00022"/>
    </source>
</evidence>
<keyword id="KW-0030">Aminoacyl-tRNA synthetase</keyword>
<keyword id="KW-0067">ATP-binding</keyword>
<keyword id="KW-0963">Cytoplasm</keyword>
<keyword id="KW-0436">Ligase</keyword>
<keyword id="KW-0547">Nucleotide-binding</keyword>
<keyword id="KW-0648">Protein biosynthesis</keyword>
<keyword id="KW-1185">Reference proteome</keyword>
<dbReference type="EC" id="6.1.1.17" evidence="1"/>
<dbReference type="EMBL" id="AE014295">
    <property type="protein sequence ID" value="AAN24300.1"/>
    <property type="molecule type" value="Genomic_DNA"/>
</dbReference>
<dbReference type="RefSeq" id="NP_695664.1">
    <property type="nucleotide sequence ID" value="NC_004307.2"/>
</dbReference>
<dbReference type="RefSeq" id="WP_007051591.1">
    <property type="nucleotide sequence ID" value="NC_004307.2"/>
</dbReference>
<dbReference type="SMR" id="Q8G709"/>
<dbReference type="STRING" id="206672.BL0469"/>
<dbReference type="EnsemblBacteria" id="AAN24300">
    <property type="protein sequence ID" value="AAN24300"/>
    <property type="gene ID" value="BL0469"/>
</dbReference>
<dbReference type="GeneID" id="69577410"/>
<dbReference type="KEGG" id="blo:BL0469"/>
<dbReference type="PATRIC" id="fig|206672.9.peg.1212"/>
<dbReference type="HOGENOM" id="CLU_015768_6_1_11"/>
<dbReference type="OrthoDB" id="9807503at2"/>
<dbReference type="PhylomeDB" id="Q8G709"/>
<dbReference type="Proteomes" id="UP000000439">
    <property type="component" value="Chromosome"/>
</dbReference>
<dbReference type="GO" id="GO:0005829">
    <property type="term" value="C:cytosol"/>
    <property type="evidence" value="ECO:0007669"/>
    <property type="project" value="TreeGrafter"/>
</dbReference>
<dbReference type="GO" id="GO:0005524">
    <property type="term" value="F:ATP binding"/>
    <property type="evidence" value="ECO:0007669"/>
    <property type="project" value="UniProtKB-UniRule"/>
</dbReference>
<dbReference type="GO" id="GO:0004818">
    <property type="term" value="F:glutamate-tRNA ligase activity"/>
    <property type="evidence" value="ECO:0007669"/>
    <property type="project" value="UniProtKB-UniRule"/>
</dbReference>
<dbReference type="GO" id="GO:0000049">
    <property type="term" value="F:tRNA binding"/>
    <property type="evidence" value="ECO:0007669"/>
    <property type="project" value="InterPro"/>
</dbReference>
<dbReference type="GO" id="GO:0008270">
    <property type="term" value="F:zinc ion binding"/>
    <property type="evidence" value="ECO:0007669"/>
    <property type="project" value="InterPro"/>
</dbReference>
<dbReference type="GO" id="GO:0006424">
    <property type="term" value="P:glutamyl-tRNA aminoacylation"/>
    <property type="evidence" value="ECO:0007669"/>
    <property type="project" value="UniProtKB-UniRule"/>
</dbReference>
<dbReference type="CDD" id="cd00808">
    <property type="entry name" value="GluRS_core"/>
    <property type="match status" value="1"/>
</dbReference>
<dbReference type="FunFam" id="3.40.50.620:FF:000149">
    <property type="entry name" value="Glutamate--tRNA ligase"/>
    <property type="match status" value="1"/>
</dbReference>
<dbReference type="Gene3D" id="1.10.10.350">
    <property type="match status" value="1"/>
</dbReference>
<dbReference type="Gene3D" id="1.10.8.70">
    <property type="entry name" value="Glutamate-tRNA synthetase, class I, anticodon-binding domain 1"/>
    <property type="match status" value="1"/>
</dbReference>
<dbReference type="Gene3D" id="1.10.1160.10">
    <property type="entry name" value="Glutamyl-trna Synthetase, Domain 2"/>
    <property type="match status" value="1"/>
</dbReference>
<dbReference type="Gene3D" id="3.90.800.10">
    <property type="entry name" value="Glutamyl-tRNA Synthetase, Domain 3"/>
    <property type="match status" value="1"/>
</dbReference>
<dbReference type="Gene3D" id="3.40.50.620">
    <property type="entry name" value="HUPs"/>
    <property type="match status" value="1"/>
</dbReference>
<dbReference type="HAMAP" id="MF_00022">
    <property type="entry name" value="Glu_tRNA_synth_type1"/>
    <property type="match status" value="1"/>
</dbReference>
<dbReference type="InterPro" id="IPR045462">
    <property type="entry name" value="aa-tRNA-synth_I_cd-bd"/>
</dbReference>
<dbReference type="InterPro" id="IPR020751">
    <property type="entry name" value="aa-tRNA-synth_I_codon-bd_sub2"/>
</dbReference>
<dbReference type="InterPro" id="IPR008925">
    <property type="entry name" value="aa_tRNA-synth_I_cd-bd_sf"/>
</dbReference>
<dbReference type="InterPro" id="IPR004527">
    <property type="entry name" value="Glu-tRNA-ligase_bac/mito"/>
</dbReference>
<dbReference type="InterPro" id="IPR020752">
    <property type="entry name" value="Glu-tRNA-synth_I_codon-bd_sub1"/>
</dbReference>
<dbReference type="InterPro" id="IPR000924">
    <property type="entry name" value="Glu/Gln-tRNA-synth"/>
</dbReference>
<dbReference type="InterPro" id="IPR020058">
    <property type="entry name" value="Glu/Gln-tRNA-synth_Ib_cat-dom"/>
</dbReference>
<dbReference type="InterPro" id="IPR020061">
    <property type="entry name" value="Glu_tRNA_lig_a-bdl"/>
</dbReference>
<dbReference type="InterPro" id="IPR049940">
    <property type="entry name" value="GluQ/Sye"/>
</dbReference>
<dbReference type="InterPro" id="IPR033910">
    <property type="entry name" value="GluRS_core"/>
</dbReference>
<dbReference type="InterPro" id="IPR014729">
    <property type="entry name" value="Rossmann-like_a/b/a_fold"/>
</dbReference>
<dbReference type="NCBIfam" id="TIGR00464">
    <property type="entry name" value="gltX_bact"/>
    <property type="match status" value="1"/>
</dbReference>
<dbReference type="PANTHER" id="PTHR43311">
    <property type="entry name" value="GLUTAMATE--TRNA LIGASE"/>
    <property type="match status" value="1"/>
</dbReference>
<dbReference type="PANTHER" id="PTHR43311:SF2">
    <property type="entry name" value="GLUTAMATE--TRNA LIGASE, MITOCHONDRIAL-RELATED"/>
    <property type="match status" value="1"/>
</dbReference>
<dbReference type="Pfam" id="PF19269">
    <property type="entry name" value="Anticodon_2"/>
    <property type="match status" value="1"/>
</dbReference>
<dbReference type="Pfam" id="PF00749">
    <property type="entry name" value="tRNA-synt_1c"/>
    <property type="match status" value="1"/>
</dbReference>
<dbReference type="PRINTS" id="PR00987">
    <property type="entry name" value="TRNASYNTHGLU"/>
</dbReference>
<dbReference type="SUPFAM" id="SSF48163">
    <property type="entry name" value="An anticodon-binding domain of class I aminoacyl-tRNA synthetases"/>
    <property type="match status" value="1"/>
</dbReference>
<dbReference type="SUPFAM" id="SSF52374">
    <property type="entry name" value="Nucleotidylyl transferase"/>
    <property type="match status" value="1"/>
</dbReference>
<protein>
    <recommendedName>
        <fullName evidence="1">Glutamate--tRNA ligase</fullName>
        <ecNumber evidence="1">6.1.1.17</ecNumber>
    </recommendedName>
    <alternativeName>
        <fullName evidence="1">Glutamyl-tRNA synthetase</fullName>
        <shortName evidence="1">GluRS</shortName>
    </alternativeName>
</protein>
<organism>
    <name type="scientific">Bifidobacterium longum (strain NCC 2705)</name>
    <dbReference type="NCBI Taxonomy" id="206672"/>
    <lineage>
        <taxon>Bacteria</taxon>
        <taxon>Bacillati</taxon>
        <taxon>Actinomycetota</taxon>
        <taxon>Actinomycetes</taxon>
        <taxon>Bifidobacteriales</taxon>
        <taxon>Bifidobacteriaceae</taxon>
        <taxon>Bifidobacterium</taxon>
    </lineage>
</organism>
<gene>
    <name evidence="1" type="primary">gltX</name>
    <name type="ordered locus">BL0469</name>
</gene>
<sequence length="506" mass="56681">MTDAENTKPELPKNVRVRFCPSPTGTPHVGMIRTALFNWAEARATGGTLIFRIEDTDAVRDSEESYNQILESLRWLGIDWDEGIDVGGPHGPYRQSERTAIYKDVAAKLLEAGYAYESFSTPEEIKERNLAAGRPAEFGYDGYDRNLTDEQKAAFRAEGRKPALRIKMPDEDIAFDDLIRGTIEFKAGSVPDYVIVRPNGDPLYTLTNPVDDAMMEVNVVLRGEDLLSSTPRQIVLYRYLMELGIAKEMPLFGHMPYVMGQGNKKLSKRDPESNLFNHRDNGFIREGLLNYLALLGWSIAPDRDVFSMDEMTEKFDVRDVKANPARFDIDKAISINAEHIRMLEPEDFLRRSVPYLHRDGVVSADNWDALTDREREVLTAAAPLVQPRVRLLGEVAGMVGSLLSTEGYLEPADDAKKQLKDSAGEVLDKAIAALEAVDEADWKTDNLHETLNKALVEEGGYKPRLAFGPVRVAMSGRRVSPPLFESMEIVGKPVSLARLKGLREHL</sequence>
<accession>Q8G709</accession>
<reference key="1">
    <citation type="journal article" date="2002" name="Proc. Natl. Acad. Sci. U.S.A.">
        <title>The genome sequence of Bifidobacterium longum reflects its adaptation to the human gastrointestinal tract.</title>
        <authorList>
            <person name="Schell M.A."/>
            <person name="Karmirantzou M."/>
            <person name="Snel B."/>
            <person name="Vilanova D."/>
            <person name="Berger B."/>
            <person name="Pessi G."/>
            <person name="Zwahlen M.-C."/>
            <person name="Desiere F."/>
            <person name="Bork P."/>
            <person name="Delley M."/>
            <person name="Pridmore R.D."/>
            <person name="Arigoni F."/>
        </authorList>
    </citation>
    <scope>NUCLEOTIDE SEQUENCE [LARGE SCALE GENOMIC DNA]</scope>
    <source>
        <strain>NCC 2705</strain>
    </source>
</reference>
<feature type="chain" id="PRO_0000119515" description="Glutamate--tRNA ligase">
    <location>
        <begin position="1"/>
        <end position="506"/>
    </location>
</feature>
<feature type="short sequence motif" description="'HIGH' region" evidence="1">
    <location>
        <begin position="21"/>
        <end position="31"/>
    </location>
</feature>
<feature type="short sequence motif" description="'KMSKS' region" evidence="1">
    <location>
        <begin position="265"/>
        <end position="269"/>
    </location>
</feature>
<feature type="binding site" evidence="1">
    <location>
        <position position="268"/>
    </location>
    <ligand>
        <name>ATP</name>
        <dbReference type="ChEBI" id="CHEBI:30616"/>
    </ligand>
</feature>
<comment type="function">
    <text evidence="1">Catalyzes the attachment of glutamate to tRNA(Glu) in a two-step reaction: glutamate is first activated by ATP to form Glu-AMP and then transferred to the acceptor end of tRNA(Glu).</text>
</comment>
<comment type="catalytic activity">
    <reaction evidence="1">
        <text>tRNA(Glu) + L-glutamate + ATP = L-glutamyl-tRNA(Glu) + AMP + diphosphate</text>
        <dbReference type="Rhea" id="RHEA:23540"/>
        <dbReference type="Rhea" id="RHEA-COMP:9663"/>
        <dbReference type="Rhea" id="RHEA-COMP:9680"/>
        <dbReference type="ChEBI" id="CHEBI:29985"/>
        <dbReference type="ChEBI" id="CHEBI:30616"/>
        <dbReference type="ChEBI" id="CHEBI:33019"/>
        <dbReference type="ChEBI" id="CHEBI:78442"/>
        <dbReference type="ChEBI" id="CHEBI:78520"/>
        <dbReference type="ChEBI" id="CHEBI:456215"/>
        <dbReference type="EC" id="6.1.1.17"/>
    </reaction>
</comment>
<comment type="subunit">
    <text evidence="1">Monomer.</text>
</comment>
<comment type="subcellular location">
    <subcellularLocation>
        <location evidence="1">Cytoplasm</location>
    </subcellularLocation>
</comment>
<comment type="similarity">
    <text evidence="1">Belongs to the class-I aminoacyl-tRNA synthetase family. Glutamate--tRNA ligase type 1 subfamily.</text>
</comment>
<name>SYE_BIFLO</name>